<gene>
    <name evidence="1" type="primary">clpP</name>
    <name type="ordered locus">Ppro_1183</name>
</gene>
<evidence type="ECO:0000255" key="1">
    <source>
        <dbReference type="HAMAP-Rule" id="MF_00444"/>
    </source>
</evidence>
<sequence length="199" mass="21846">MYIPMVVEQSGRGERAYDIYSRLLKERIIFLGGGIDDQVANLIIAQLLFLEAEDPDKDIHLYINSPGGVVTSGMAIYDTMRYIKAPVSTICVGQAASMGAVLLAAGEKGKRFSLNHSRIMIHQPLGGFQGQATDISIHAKEILRMKEELNSILADLTGQSKERIEADTDRDYFMSATEAEEYGLIDATFTRKPDSGGTP</sequence>
<organism>
    <name type="scientific">Pelobacter propionicus (strain DSM 2379 / NBRC 103807 / OttBd1)</name>
    <dbReference type="NCBI Taxonomy" id="338966"/>
    <lineage>
        <taxon>Bacteria</taxon>
        <taxon>Pseudomonadati</taxon>
        <taxon>Thermodesulfobacteriota</taxon>
        <taxon>Desulfuromonadia</taxon>
        <taxon>Desulfuromonadales</taxon>
        <taxon>Desulfuromonadaceae</taxon>
        <taxon>Pelobacter</taxon>
    </lineage>
</organism>
<accession>A1AN85</accession>
<proteinExistence type="inferred from homology"/>
<protein>
    <recommendedName>
        <fullName evidence="1">ATP-dependent Clp protease proteolytic subunit</fullName>
        <ecNumber evidence="1">3.4.21.92</ecNumber>
    </recommendedName>
    <alternativeName>
        <fullName evidence="1">Endopeptidase Clp</fullName>
    </alternativeName>
</protein>
<keyword id="KW-0963">Cytoplasm</keyword>
<keyword id="KW-0378">Hydrolase</keyword>
<keyword id="KW-0645">Protease</keyword>
<keyword id="KW-1185">Reference proteome</keyword>
<keyword id="KW-0720">Serine protease</keyword>
<feature type="chain" id="PRO_1000026111" description="ATP-dependent Clp protease proteolytic subunit">
    <location>
        <begin position="1"/>
        <end position="199"/>
    </location>
</feature>
<feature type="active site" description="Nucleophile" evidence="1">
    <location>
        <position position="97"/>
    </location>
</feature>
<feature type="active site" evidence="1">
    <location>
        <position position="122"/>
    </location>
</feature>
<dbReference type="EC" id="3.4.21.92" evidence="1"/>
<dbReference type="EMBL" id="CP000482">
    <property type="protein sequence ID" value="ABK98805.1"/>
    <property type="molecule type" value="Genomic_DNA"/>
</dbReference>
<dbReference type="RefSeq" id="WP_011735107.1">
    <property type="nucleotide sequence ID" value="NC_008609.1"/>
</dbReference>
<dbReference type="SMR" id="A1AN85"/>
<dbReference type="STRING" id="338966.Ppro_1183"/>
<dbReference type="MEROPS" id="S14.001"/>
<dbReference type="KEGG" id="ppd:Ppro_1183"/>
<dbReference type="eggNOG" id="COG0740">
    <property type="taxonomic scope" value="Bacteria"/>
</dbReference>
<dbReference type="HOGENOM" id="CLU_058707_3_2_7"/>
<dbReference type="OrthoDB" id="9802800at2"/>
<dbReference type="Proteomes" id="UP000006732">
    <property type="component" value="Chromosome"/>
</dbReference>
<dbReference type="GO" id="GO:0005737">
    <property type="term" value="C:cytoplasm"/>
    <property type="evidence" value="ECO:0007669"/>
    <property type="project" value="UniProtKB-SubCell"/>
</dbReference>
<dbReference type="GO" id="GO:0009368">
    <property type="term" value="C:endopeptidase Clp complex"/>
    <property type="evidence" value="ECO:0007669"/>
    <property type="project" value="TreeGrafter"/>
</dbReference>
<dbReference type="GO" id="GO:0004176">
    <property type="term" value="F:ATP-dependent peptidase activity"/>
    <property type="evidence" value="ECO:0007669"/>
    <property type="project" value="InterPro"/>
</dbReference>
<dbReference type="GO" id="GO:0051117">
    <property type="term" value="F:ATPase binding"/>
    <property type="evidence" value="ECO:0007669"/>
    <property type="project" value="TreeGrafter"/>
</dbReference>
<dbReference type="GO" id="GO:0004252">
    <property type="term" value="F:serine-type endopeptidase activity"/>
    <property type="evidence" value="ECO:0007669"/>
    <property type="project" value="UniProtKB-UniRule"/>
</dbReference>
<dbReference type="GO" id="GO:0006515">
    <property type="term" value="P:protein quality control for misfolded or incompletely synthesized proteins"/>
    <property type="evidence" value="ECO:0007669"/>
    <property type="project" value="TreeGrafter"/>
</dbReference>
<dbReference type="CDD" id="cd07017">
    <property type="entry name" value="S14_ClpP_2"/>
    <property type="match status" value="1"/>
</dbReference>
<dbReference type="FunFam" id="3.90.226.10:FF:000001">
    <property type="entry name" value="ATP-dependent Clp protease proteolytic subunit"/>
    <property type="match status" value="1"/>
</dbReference>
<dbReference type="Gene3D" id="3.90.226.10">
    <property type="entry name" value="2-enoyl-CoA Hydratase, Chain A, domain 1"/>
    <property type="match status" value="1"/>
</dbReference>
<dbReference type="HAMAP" id="MF_00444">
    <property type="entry name" value="ClpP"/>
    <property type="match status" value="1"/>
</dbReference>
<dbReference type="InterPro" id="IPR001907">
    <property type="entry name" value="ClpP"/>
</dbReference>
<dbReference type="InterPro" id="IPR029045">
    <property type="entry name" value="ClpP/crotonase-like_dom_sf"/>
</dbReference>
<dbReference type="InterPro" id="IPR023562">
    <property type="entry name" value="ClpP/TepA"/>
</dbReference>
<dbReference type="InterPro" id="IPR018215">
    <property type="entry name" value="ClpP_Ser_AS"/>
</dbReference>
<dbReference type="NCBIfam" id="TIGR00493">
    <property type="entry name" value="clpP"/>
    <property type="match status" value="1"/>
</dbReference>
<dbReference type="NCBIfam" id="NF001368">
    <property type="entry name" value="PRK00277.1"/>
    <property type="match status" value="1"/>
</dbReference>
<dbReference type="NCBIfam" id="NF009205">
    <property type="entry name" value="PRK12553.1"/>
    <property type="match status" value="1"/>
</dbReference>
<dbReference type="PANTHER" id="PTHR10381">
    <property type="entry name" value="ATP-DEPENDENT CLP PROTEASE PROTEOLYTIC SUBUNIT"/>
    <property type="match status" value="1"/>
</dbReference>
<dbReference type="PANTHER" id="PTHR10381:SF70">
    <property type="entry name" value="ATP-DEPENDENT CLP PROTEASE PROTEOLYTIC SUBUNIT"/>
    <property type="match status" value="1"/>
</dbReference>
<dbReference type="Pfam" id="PF00574">
    <property type="entry name" value="CLP_protease"/>
    <property type="match status" value="1"/>
</dbReference>
<dbReference type="PRINTS" id="PR00127">
    <property type="entry name" value="CLPPROTEASEP"/>
</dbReference>
<dbReference type="SUPFAM" id="SSF52096">
    <property type="entry name" value="ClpP/crotonase"/>
    <property type="match status" value="1"/>
</dbReference>
<dbReference type="PROSITE" id="PS00381">
    <property type="entry name" value="CLP_PROTEASE_SER"/>
    <property type="match status" value="1"/>
</dbReference>
<reference key="1">
    <citation type="submission" date="2006-10" db="EMBL/GenBank/DDBJ databases">
        <title>Complete sequence of chromosome of Pelobacter propionicus DSM 2379.</title>
        <authorList>
            <consortium name="US DOE Joint Genome Institute"/>
            <person name="Copeland A."/>
            <person name="Lucas S."/>
            <person name="Lapidus A."/>
            <person name="Barry K."/>
            <person name="Detter J.C."/>
            <person name="Glavina del Rio T."/>
            <person name="Hammon N."/>
            <person name="Israni S."/>
            <person name="Dalin E."/>
            <person name="Tice H."/>
            <person name="Pitluck S."/>
            <person name="Saunders E."/>
            <person name="Brettin T."/>
            <person name="Bruce D."/>
            <person name="Han C."/>
            <person name="Tapia R."/>
            <person name="Schmutz J."/>
            <person name="Larimer F."/>
            <person name="Land M."/>
            <person name="Hauser L."/>
            <person name="Kyrpides N."/>
            <person name="Kim E."/>
            <person name="Lovley D."/>
            <person name="Richardson P."/>
        </authorList>
    </citation>
    <scope>NUCLEOTIDE SEQUENCE [LARGE SCALE GENOMIC DNA]</scope>
    <source>
        <strain>DSM 2379 / NBRC 103807 / OttBd1</strain>
    </source>
</reference>
<name>CLPP_PELPD</name>
<comment type="function">
    <text evidence="1">Cleaves peptides in various proteins in a process that requires ATP hydrolysis. Has a chymotrypsin-like activity. Plays a major role in the degradation of misfolded proteins.</text>
</comment>
<comment type="catalytic activity">
    <reaction evidence="1">
        <text>Hydrolysis of proteins to small peptides in the presence of ATP and magnesium. alpha-casein is the usual test substrate. In the absence of ATP, only oligopeptides shorter than five residues are hydrolyzed (such as succinyl-Leu-Tyr-|-NHMec, and Leu-Tyr-Leu-|-Tyr-Trp, in which cleavage of the -Tyr-|-Leu- and -Tyr-|-Trp bonds also occurs).</text>
        <dbReference type="EC" id="3.4.21.92"/>
    </reaction>
</comment>
<comment type="subunit">
    <text evidence="1">Fourteen ClpP subunits assemble into 2 heptameric rings which stack back to back to give a disk-like structure with a central cavity, resembling the structure of eukaryotic proteasomes.</text>
</comment>
<comment type="subcellular location">
    <subcellularLocation>
        <location evidence="1">Cytoplasm</location>
    </subcellularLocation>
</comment>
<comment type="similarity">
    <text evidence="1">Belongs to the peptidase S14 family.</text>
</comment>